<accession>Q5HJ89</accession>
<organism>
    <name type="scientific">Staphylococcus aureus (strain COL)</name>
    <dbReference type="NCBI Taxonomy" id="93062"/>
    <lineage>
        <taxon>Bacteria</taxon>
        <taxon>Bacillati</taxon>
        <taxon>Bacillota</taxon>
        <taxon>Bacilli</taxon>
        <taxon>Bacillales</taxon>
        <taxon>Staphylococcaceae</taxon>
        <taxon>Staphylococcus</taxon>
    </lineage>
</organism>
<proteinExistence type="inferred from homology"/>
<comment type="function">
    <text evidence="1">Component of the ESAT-6 secretion system (Ess). Required for the secretion of EsxA and EsxB.</text>
</comment>
<comment type="subcellular location">
    <subcellularLocation>
        <location evidence="1">Cell membrane</location>
        <topology evidence="2">Single-pass type I membrane protein</topology>
    </subcellularLocation>
</comment>
<comment type="similarity">
    <text evidence="4">Belongs to the EssA family.</text>
</comment>
<sequence>MLMNSVIALTFLTASSNNGGLNIDVQQEEEKRINNDLNQYDTTLFNKDSKAVNDAIAKQKKERQQQIKNDMFQNQASHSTRLNETKKVLFSKSNLEKTSESDKSPYIQNKQEKKIFPYILMSVGAFLTLGFVIFSIHKGRRTKNESARKSNI</sequence>
<evidence type="ECO:0000250" key="1">
    <source>
        <dbReference type="UniProtKB" id="P0C052"/>
    </source>
</evidence>
<evidence type="ECO:0000255" key="2"/>
<evidence type="ECO:0000256" key="3">
    <source>
        <dbReference type="SAM" id="MobiDB-lite"/>
    </source>
</evidence>
<evidence type="ECO:0000305" key="4"/>
<dbReference type="EMBL" id="CP000046">
    <property type="protein sequence ID" value="AAW38827.1"/>
    <property type="molecule type" value="Genomic_DNA"/>
</dbReference>
<dbReference type="RefSeq" id="WP_000928935.1">
    <property type="nucleotide sequence ID" value="NZ_JBGOFO010000001.1"/>
</dbReference>
<dbReference type="KEGG" id="sac:SACOL0273"/>
<dbReference type="HOGENOM" id="CLU_144832_0_0_9"/>
<dbReference type="Proteomes" id="UP000000530">
    <property type="component" value="Chromosome"/>
</dbReference>
<dbReference type="GO" id="GO:0005886">
    <property type="term" value="C:plasma membrane"/>
    <property type="evidence" value="ECO:0007669"/>
    <property type="project" value="UniProtKB-SubCell"/>
</dbReference>
<dbReference type="InterPro" id="IPR034026">
    <property type="entry name" value="EssA"/>
</dbReference>
<dbReference type="InterPro" id="IPR018920">
    <property type="entry name" value="EssA/YueC"/>
</dbReference>
<dbReference type="NCBIfam" id="TIGR03927">
    <property type="entry name" value="T7SS_EssA_Firm"/>
    <property type="match status" value="1"/>
</dbReference>
<dbReference type="Pfam" id="PF10661">
    <property type="entry name" value="EssA"/>
    <property type="match status" value="1"/>
</dbReference>
<name>ESSA_STAAC</name>
<protein>
    <recommendedName>
        <fullName evidence="1">ESAT-6 secretion machinery protein EssA</fullName>
    </recommendedName>
</protein>
<reference key="1">
    <citation type="journal article" date="2005" name="J. Bacteriol.">
        <title>Insights on evolution of virulence and resistance from the complete genome analysis of an early methicillin-resistant Staphylococcus aureus strain and a biofilm-producing methicillin-resistant Staphylococcus epidermidis strain.</title>
        <authorList>
            <person name="Gill S.R."/>
            <person name="Fouts D.E."/>
            <person name="Archer G.L."/>
            <person name="Mongodin E.F."/>
            <person name="DeBoy R.T."/>
            <person name="Ravel J."/>
            <person name="Paulsen I.T."/>
            <person name="Kolonay J.F."/>
            <person name="Brinkac L.M."/>
            <person name="Beanan M.J."/>
            <person name="Dodson R.J."/>
            <person name="Daugherty S.C."/>
            <person name="Madupu R."/>
            <person name="Angiuoli S.V."/>
            <person name="Durkin A.S."/>
            <person name="Haft D.H."/>
            <person name="Vamathevan J.J."/>
            <person name="Khouri H."/>
            <person name="Utterback T.R."/>
            <person name="Lee C."/>
            <person name="Dimitrov G."/>
            <person name="Jiang L."/>
            <person name="Qin H."/>
            <person name="Weidman J."/>
            <person name="Tran K."/>
            <person name="Kang K.H."/>
            <person name="Hance I.R."/>
            <person name="Nelson K.E."/>
            <person name="Fraser C.M."/>
        </authorList>
    </citation>
    <scope>NUCLEOTIDE SEQUENCE [LARGE SCALE GENOMIC DNA]</scope>
    <source>
        <strain>COL</strain>
    </source>
</reference>
<gene>
    <name evidence="1" type="primary">essA</name>
    <name type="ordered locus">SACOL0273</name>
</gene>
<keyword id="KW-1003">Cell membrane</keyword>
<keyword id="KW-0472">Membrane</keyword>
<keyword id="KW-0812">Transmembrane</keyword>
<keyword id="KW-1133">Transmembrane helix</keyword>
<keyword id="KW-0843">Virulence</keyword>
<feature type="chain" id="PRO_0000019569" description="ESAT-6 secretion machinery protein EssA">
    <location>
        <begin position="1"/>
        <end position="152"/>
    </location>
</feature>
<feature type="topological domain" description="Cytoplasmic" evidence="1">
    <location>
        <begin position="1"/>
        <end position="114"/>
    </location>
</feature>
<feature type="transmembrane region" description="Helical" evidence="2">
    <location>
        <begin position="115"/>
        <end position="135"/>
    </location>
</feature>
<feature type="topological domain" description="Extracellular" evidence="1">
    <location>
        <begin position="136"/>
        <end position="152"/>
    </location>
</feature>
<feature type="region of interest" description="Disordered" evidence="3">
    <location>
        <begin position="62"/>
        <end position="83"/>
    </location>
</feature>
<feature type="compositionally biased region" description="Polar residues" evidence="3">
    <location>
        <begin position="66"/>
        <end position="80"/>
    </location>
</feature>